<protein>
    <recommendedName>
        <fullName evidence="1">Xylose isomerase</fullName>
        <ecNumber evidence="1">5.3.1.5</ecNumber>
    </recommendedName>
</protein>
<reference key="1">
    <citation type="journal article" date="2006" name="PLoS Genet.">
        <title>The complete genome sequence and comparative genome analysis of the high pathogenicity Yersinia enterocolitica strain 8081.</title>
        <authorList>
            <person name="Thomson N.R."/>
            <person name="Howard S."/>
            <person name="Wren B.W."/>
            <person name="Holden M.T.G."/>
            <person name="Crossman L."/>
            <person name="Challis G.L."/>
            <person name="Churcher C."/>
            <person name="Mungall K."/>
            <person name="Brooks K."/>
            <person name="Chillingworth T."/>
            <person name="Feltwell T."/>
            <person name="Abdellah Z."/>
            <person name="Hauser H."/>
            <person name="Jagels K."/>
            <person name="Maddison M."/>
            <person name="Moule S."/>
            <person name="Sanders M."/>
            <person name="Whitehead S."/>
            <person name="Quail M.A."/>
            <person name="Dougan G."/>
            <person name="Parkhill J."/>
            <person name="Prentice M.B."/>
        </authorList>
    </citation>
    <scope>NUCLEOTIDE SEQUENCE [LARGE SCALE GENOMIC DNA]</scope>
    <source>
        <strain>NCTC 13174 / 8081</strain>
    </source>
</reference>
<gene>
    <name evidence="1" type="primary">xylA</name>
    <name type="ordered locus">YE4122</name>
</gene>
<evidence type="ECO:0000255" key="1">
    <source>
        <dbReference type="HAMAP-Rule" id="MF_00455"/>
    </source>
</evidence>
<sequence length="439" mass="49444">MQSYFDELEQVRYEGSQNTNPLAFHHYNPDEIILGKRMADHLRFAACYWHTFCWGGADMFGSNAFERPWQQSGDALALAKRKADVAFEFFHKLNVPYYCFHDVDVSPEGASLKEYLNNFAVMTDVLAEKQASSGVKLLWGTANCFTHPRYGAGAATNPDPEVFSWAATQVFTAMNATQKLGGENYVLWGGREGYETLLNTDLRQEREQIGRFMQMVVEHKHKTGFQGTLLIEPKPQEPTKHQYDYDVATVYGFLKQFGLEKEIKVNIEANHATLAGHSFHHEIASAIALGIFGSVDANRGDPQLGWDTDQFPNSVEENALVMFEILKAGGFTTGGLNFDAKVRRQSTDKYDLFYGHIGAMDTMALALKIAAKMIEDGQLDKQVAERYAGWSSDLGQQILKGKMSLEDLASYAEQHNLNPHHQSGHQELLENRVNRYIFG</sequence>
<keyword id="KW-0119">Carbohydrate metabolism</keyword>
<keyword id="KW-0963">Cytoplasm</keyword>
<keyword id="KW-0413">Isomerase</keyword>
<keyword id="KW-0460">Magnesium</keyword>
<keyword id="KW-0479">Metal-binding</keyword>
<keyword id="KW-0859">Xylose metabolism</keyword>
<accession>A1JT10</accession>
<organism>
    <name type="scientific">Yersinia enterocolitica serotype O:8 / biotype 1B (strain NCTC 13174 / 8081)</name>
    <dbReference type="NCBI Taxonomy" id="393305"/>
    <lineage>
        <taxon>Bacteria</taxon>
        <taxon>Pseudomonadati</taxon>
        <taxon>Pseudomonadota</taxon>
        <taxon>Gammaproteobacteria</taxon>
        <taxon>Enterobacterales</taxon>
        <taxon>Yersiniaceae</taxon>
        <taxon>Yersinia</taxon>
    </lineage>
</organism>
<name>XYLA_YERE8</name>
<feature type="chain" id="PRO_1000026459" description="Xylose isomerase">
    <location>
        <begin position="1"/>
        <end position="439"/>
    </location>
</feature>
<feature type="active site" evidence="1">
    <location>
        <position position="101"/>
    </location>
</feature>
<feature type="active site" evidence="1">
    <location>
        <position position="104"/>
    </location>
</feature>
<feature type="binding site" evidence="1">
    <location>
        <position position="232"/>
    </location>
    <ligand>
        <name>Mg(2+)</name>
        <dbReference type="ChEBI" id="CHEBI:18420"/>
        <label>1</label>
    </ligand>
</feature>
<feature type="binding site" evidence="1">
    <location>
        <position position="268"/>
    </location>
    <ligand>
        <name>Mg(2+)</name>
        <dbReference type="ChEBI" id="CHEBI:18420"/>
        <label>1</label>
    </ligand>
</feature>
<feature type="binding site" evidence="1">
    <location>
        <position position="268"/>
    </location>
    <ligand>
        <name>Mg(2+)</name>
        <dbReference type="ChEBI" id="CHEBI:18420"/>
        <label>2</label>
    </ligand>
</feature>
<feature type="binding site" evidence="1">
    <location>
        <position position="271"/>
    </location>
    <ligand>
        <name>Mg(2+)</name>
        <dbReference type="ChEBI" id="CHEBI:18420"/>
        <label>2</label>
    </ligand>
</feature>
<feature type="binding site" evidence="1">
    <location>
        <position position="296"/>
    </location>
    <ligand>
        <name>Mg(2+)</name>
        <dbReference type="ChEBI" id="CHEBI:18420"/>
        <label>1</label>
    </ligand>
</feature>
<feature type="binding site" evidence="1">
    <location>
        <position position="307"/>
    </location>
    <ligand>
        <name>Mg(2+)</name>
        <dbReference type="ChEBI" id="CHEBI:18420"/>
        <label>2</label>
    </ligand>
</feature>
<feature type="binding site" evidence="1">
    <location>
        <position position="309"/>
    </location>
    <ligand>
        <name>Mg(2+)</name>
        <dbReference type="ChEBI" id="CHEBI:18420"/>
        <label>2</label>
    </ligand>
</feature>
<feature type="binding site" evidence="1">
    <location>
        <position position="339"/>
    </location>
    <ligand>
        <name>Mg(2+)</name>
        <dbReference type="ChEBI" id="CHEBI:18420"/>
        <label>1</label>
    </ligand>
</feature>
<comment type="catalytic activity">
    <reaction evidence="1">
        <text>alpha-D-xylose = alpha-D-xylulofuranose</text>
        <dbReference type="Rhea" id="RHEA:22816"/>
        <dbReference type="ChEBI" id="CHEBI:28518"/>
        <dbReference type="ChEBI" id="CHEBI:188998"/>
        <dbReference type="EC" id="5.3.1.5"/>
    </reaction>
</comment>
<comment type="cofactor">
    <cofactor evidence="1">
        <name>Mg(2+)</name>
        <dbReference type="ChEBI" id="CHEBI:18420"/>
    </cofactor>
    <text evidence="1">Binds 2 magnesium ions per subunit.</text>
</comment>
<comment type="subunit">
    <text evidence="1">Homotetramer.</text>
</comment>
<comment type="subcellular location">
    <subcellularLocation>
        <location evidence="1">Cytoplasm</location>
    </subcellularLocation>
</comment>
<comment type="similarity">
    <text evidence="1">Belongs to the xylose isomerase family.</text>
</comment>
<proteinExistence type="inferred from homology"/>
<dbReference type="EC" id="5.3.1.5" evidence="1"/>
<dbReference type="EMBL" id="AM286415">
    <property type="protein sequence ID" value="CAL14138.1"/>
    <property type="molecule type" value="Genomic_DNA"/>
</dbReference>
<dbReference type="RefSeq" id="WP_011817425.1">
    <property type="nucleotide sequence ID" value="NC_008800.1"/>
</dbReference>
<dbReference type="RefSeq" id="YP_001008258.1">
    <property type="nucleotide sequence ID" value="NC_008800.1"/>
</dbReference>
<dbReference type="SMR" id="A1JT10"/>
<dbReference type="KEGG" id="yen:YE4122"/>
<dbReference type="PATRIC" id="fig|393305.7.peg.4387"/>
<dbReference type="eggNOG" id="COG2115">
    <property type="taxonomic scope" value="Bacteria"/>
</dbReference>
<dbReference type="HOGENOM" id="CLU_037261_1_0_6"/>
<dbReference type="OrthoDB" id="9763981at2"/>
<dbReference type="Proteomes" id="UP000000642">
    <property type="component" value="Chromosome"/>
</dbReference>
<dbReference type="GO" id="GO:0005737">
    <property type="term" value="C:cytoplasm"/>
    <property type="evidence" value="ECO:0007669"/>
    <property type="project" value="UniProtKB-SubCell"/>
</dbReference>
<dbReference type="GO" id="GO:0000287">
    <property type="term" value="F:magnesium ion binding"/>
    <property type="evidence" value="ECO:0007669"/>
    <property type="project" value="UniProtKB-UniRule"/>
</dbReference>
<dbReference type="GO" id="GO:0009045">
    <property type="term" value="F:xylose isomerase activity"/>
    <property type="evidence" value="ECO:0007669"/>
    <property type="project" value="UniProtKB-UniRule"/>
</dbReference>
<dbReference type="GO" id="GO:0042732">
    <property type="term" value="P:D-xylose metabolic process"/>
    <property type="evidence" value="ECO:0007669"/>
    <property type="project" value="UniProtKB-UniRule"/>
</dbReference>
<dbReference type="FunFam" id="3.20.20.150:FF:000002">
    <property type="entry name" value="Xylose isomerase"/>
    <property type="match status" value="1"/>
</dbReference>
<dbReference type="Gene3D" id="3.20.20.150">
    <property type="entry name" value="Divalent-metal-dependent TIM barrel enzymes"/>
    <property type="match status" value="1"/>
</dbReference>
<dbReference type="HAMAP" id="MF_00455">
    <property type="entry name" value="Xylose_isom_A"/>
    <property type="match status" value="1"/>
</dbReference>
<dbReference type="InterPro" id="IPR036237">
    <property type="entry name" value="Xyl_isomerase-like_sf"/>
</dbReference>
<dbReference type="InterPro" id="IPR013452">
    <property type="entry name" value="Xylose_isom_bac"/>
</dbReference>
<dbReference type="InterPro" id="IPR001998">
    <property type="entry name" value="Xylose_isomerase"/>
</dbReference>
<dbReference type="NCBIfam" id="NF003998">
    <property type="entry name" value="PRK05474.1"/>
    <property type="match status" value="1"/>
</dbReference>
<dbReference type="NCBIfam" id="TIGR02630">
    <property type="entry name" value="xylose_isom_A"/>
    <property type="match status" value="1"/>
</dbReference>
<dbReference type="PANTHER" id="PTHR48408">
    <property type="match status" value="1"/>
</dbReference>
<dbReference type="PANTHER" id="PTHR48408:SF1">
    <property type="entry name" value="XYLOSE ISOMERASE"/>
    <property type="match status" value="1"/>
</dbReference>
<dbReference type="PRINTS" id="PR00688">
    <property type="entry name" value="XYLOSISMRASE"/>
</dbReference>
<dbReference type="SUPFAM" id="SSF51658">
    <property type="entry name" value="Xylose isomerase-like"/>
    <property type="match status" value="1"/>
</dbReference>
<dbReference type="PROSITE" id="PS51415">
    <property type="entry name" value="XYLOSE_ISOMERASE"/>
    <property type="match status" value="1"/>
</dbReference>